<gene>
    <name evidence="1" type="primary">ilvD</name>
    <name type="ordered locus">Blon_2134</name>
    <name type="ordered locus">BLIJ_2211</name>
</gene>
<comment type="function">
    <text evidence="1">Functions in the biosynthesis of branched-chain amino acids. Catalyzes the dehydration of (2R,3R)-2,3-dihydroxy-3-methylpentanoate (2,3-dihydroxy-3-methylvalerate) into 2-oxo-3-methylpentanoate (2-oxo-3-methylvalerate) and of (2R)-2,3-dihydroxy-3-methylbutanoate (2,3-dihydroxyisovalerate) into 2-oxo-3-methylbutanoate (2-oxoisovalerate), the penultimate precursor to L-isoleucine and L-valine, respectively.</text>
</comment>
<comment type="catalytic activity">
    <reaction evidence="1">
        <text>(2R)-2,3-dihydroxy-3-methylbutanoate = 3-methyl-2-oxobutanoate + H2O</text>
        <dbReference type="Rhea" id="RHEA:24809"/>
        <dbReference type="ChEBI" id="CHEBI:11851"/>
        <dbReference type="ChEBI" id="CHEBI:15377"/>
        <dbReference type="ChEBI" id="CHEBI:49072"/>
        <dbReference type="EC" id="4.2.1.9"/>
    </reaction>
    <physiologicalReaction direction="left-to-right" evidence="1">
        <dbReference type="Rhea" id="RHEA:24810"/>
    </physiologicalReaction>
</comment>
<comment type="catalytic activity">
    <reaction evidence="1">
        <text>(2R,3R)-2,3-dihydroxy-3-methylpentanoate = (S)-3-methyl-2-oxopentanoate + H2O</text>
        <dbReference type="Rhea" id="RHEA:27694"/>
        <dbReference type="ChEBI" id="CHEBI:15377"/>
        <dbReference type="ChEBI" id="CHEBI:35146"/>
        <dbReference type="ChEBI" id="CHEBI:49258"/>
        <dbReference type="EC" id="4.2.1.9"/>
    </reaction>
    <physiologicalReaction direction="left-to-right" evidence="1">
        <dbReference type="Rhea" id="RHEA:27695"/>
    </physiologicalReaction>
</comment>
<comment type="cofactor">
    <cofactor evidence="1">
        <name>[2Fe-2S] cluster</name>
        <dbReference type="ChEBI" id="CHEBI:190135"/>
    </cofactor>
    <text evidence="1">Binds 1 [2Fe-2S] cluster per subunit. This cluster acts as a Lewis acid cofactor.</text>
</comment>
<comment type="cofactor">
    <cofactor evidence="1">
        <name>Mg(2+)</name>
        <dbReference type="ChEBI" id="CHEBI:18420"/>
    </cofactor>
</comment>
<comment type="pathway">
    <text evidence="1">Amino-acid biosynthesis; L-isoleucine biosynthesis; L-isoleucine from 2-oxobutanoate: step 3/4.</text>
</comment>
<comment type="pathway">
    <text evidence="1">Amino-acid biosynthesis; L-valine biosynthesis; L-valine from pyruvate: step 3/4.</text>
</comment>
<comment type="subunit">
    <text evidence="1">Homodimer.</text>
</comment>
<comment type="similarity">
    <text evidence="1">Belongs to the IlvD/Edd family.</text>
</comment>
<comment type="sequence caution" evidence="2">
    <conflict type="erroneous initiation">
        <sequence resource="EMBL-CDS" id="BAJ69788"/>
    </conflict>
    <text>Truncated N-terminus.</text>
</comment>
<protein>
    <recommendedName>
        <fullName evidence="1">Dihydroxy-acid dehydratase</fullName>
        <shortName evidence="1">DAD</shortName>
        <ecNumber evidence="1">4.2.1.9</ecNumber>
    </recommendedName>
</protein>
<evidence type="ECO:0000255" key="1">
    <source>
        <dbReference type="HAMAP-Rule" id="MF_00012"/>
    </source>
</evidence>
<evidence type="ECO:0000305" key="2"/>
<proteinExistence type="inferred from homology"/>
<keyword id="KW-0001">2Fe-2S</keyword>
<keyword id="KW-0028">Amino-acid biosynthesis</keyword>
<keyword id="KW-0100">Branched-chain amino acid biosynthesis</keyword>
<keyword id="KW-0408">Iron</keyword>
<keyword id="KW-0411">Iron-sulfur</keyword>
<keyword id="KW-0456">Lyase</keyword>
<keyword id="KW-0460">Magnesium</keyword>
<keyword id="KW-0479">Metal-binding</keyword>
<feature type="chain" id="PRO_1000190651" description="Dihydroxy-acid dehydratase">
    <location>
        <begin position="1"/>
        <end position="620"/>
    </location>
</feature>
<feature type="active site" description="Proton acceptor" evidence="1">
    <location>
        <position position="519"/>
    </location>
</feature>
<feature type="binding site" evidence="1">
    <location>
        <position position="82"/>
    </location>
    <ligand>
        <name>Mg(2+)</name>
        <dbReference type="ChEBI" id="CHEBI:18420"/>
    </ligand>
</feature>
<feature type="binding site" evidence="1">
    <location>
        <position position="123"/>
    </location>
    <ligand>
        <name>[2Fe-2S] cluster</name>
        <dbReference type="ChEBI" id="CHEBI:190135"/>
    </ligand>
</feature>
<feature type="binding site" evidence="1">
    <location>
        <position position="124"/>
    </location>
    <ligand>
        <name>Mg(2+)</name>
        <dbReference type="ChEBI" id="CHEBI:18420"/>
    </ligand>
</feature>
<feature type="binding site" description="via carbamate group" evidence="1">
    <location>
        <position position="125"/>
    </location>
    <ligand>
        <name>Mg(2+)</name>
        <dbReference type="ChEBI" id="CHEBI:18420"/>
    </ligand>
</feature>
<feature type="binding site" evidence="1">
    <location>
        <position position="197"/>
    </location>
    <ligand>
        <name>[2Fe-2S] cluster</name>
        <dbReference type="ChEBI" id="CHEBI:190135"/>
    </ligand>
</feature>
<feature type="binding site" evidence="1">
    <location>
        <position position="493"/>
    </location>
    <ligand>
        <name>Mg(2+)</name>
        <dbReference type="ChEBI" id="CHEBI:18420"/>
    </ligand>
</feature>
<feature type="modified residue" description="N6-carboxylysine" evidence="1">
    <location>
        <position position="125"/>
    </location>
</feature>
<name>ILVD_BIFLS</name>
<sequence>MTEMRSAKIMSGRVFAGARALYRAAGVSGDDMGKKPIIAIANSFDEFLPGHVHLNKVGRIVSEAIKEAGGIPREFNTMAVDDGIAMGHTGMLYSLPSRDIIADTVEYQCNAHCADALICIPNCDKVVPGMLMAALRLNIPTVFVSGGPMEAGTTVLADGTVKSTDLIDVMYATADDSVSDEELLNYEKTVCPTCGSCAGMFTANSMNCLTEAIGLALPGNGTILASHSYRKDLFERAAKQVVKIAHQYYDDSDDSVLPRSIATKEAFENAMTMDVAMGGSTNTVLHILAMAQSADVDFTLDDIERISHTVPCICKASPSGKWEISDVHRAGGITGILGELDRAGKLHTNVHSIDYPTLEAKLADWDIMRPTCTEEAQQMYKAAPGHIISPEPWTHTTLFDSLDRDRTNGAIHDIDHPEIHEGGLAVLRGNLAPDGCVVKTAGVPPEIWKFRGPALVVDSQEQAIEVILNDTLKPGMALVIRYEGPKGGPGMQEMLYPTSFVKGKGIGKQVAMLTDGRYSGGSSGLAIGHMAPEAANKGPVALIRNGDIIDIDIEARSVNVELTDEQLDERRRELEAGDGYVAHRNRHVSQALKAYAAFARSADKGATRDPELINKLSGLD</sequence>
<organism>
    <name type="scientific">Bifidobacterium longum subsp. infantis (strain ATCC 15697 / DSM 20088 / JCM 1222 / NCTC 11817 / S12)</name>
    <dbReference type="NCBI Taxonomy" id="391904"/>
    <lineage>
        <taxon>Bacteria</taxon>
        <taxon>Bacillati</taxon>
        <taxon>Actinomycetota</taxon>
        <taxon>Actinomycetes</taxon>
        <taxon>Bifidobacteriales</taxon>
        <taxon>Bifidobacteriaceae</taxon>
        <taxon>Bifidobacterium</taxon>
    </lineage>
</organism>
<accession>B7GUP9</accession>
<accession>E8MMY5</accession>
<dbReference type="EC" id="4.2.1.9" evidence="1"/>
<dbReference type="EMBL" id="CP001095">
    <property type="protein sequence ID" value="ACJ53195.1"/>
    <property type="molecule type" value="Genomic_DNA"/>
</dbReference>
<dbReference type="EMBL" id="AP010889">
    <property type="protein sequence ID" value="BAJ69788.1"/>
    <property type="status" value="ALT_INIT"/>
    <property type="molecule type" value="Genomic_DNA"/>
</dbReference>
<dbReference type="RefSeq" id="WP_012578399.1">
    <property type="nucleotide sequence ID" value="NC_011593.1"/>
</dbReference>
<dbReference type="SMR" id="B7GUP9"/>
<dbReference type="KEGG" id="bln:Blon_2134"/>
<dbReference type="KEGG" id="blon:BLIJ_2211"/>
<dbReference type="PATRIC" id="fig|391904.8.peg.2213"/>
<dbReference type="HOGENOM" id="CLU_014271_4_2_11"/>
<dbReference type="UniPathway" id="UPA00047">
    <property type="reaction ID" value="UER00057"/>
</dbReference>
<dbReference type="UniPathway" id="UPA00049">
    <property type="reaction ID" value="UER00061"/>
</dbReference>
<dbReference type="Proteomes" id="UP000001360">
    <property type="component" value="Chromosome"/>
</dbReference>
<dbReference type="GO" id="GO:0005829">
    <property type="term" value="C:cytosol"/>
    <property type="evidence" value="ECO:0007669"/>
    <property type="project" value="TreeGrafter"/>
</dbReference>
<dbReference type="GO" id="GO:0051537">
    <property type="term" value="F:2 iron, 2 sulfur cluster binding"/>
    <property type="evidence" value="ECO:0007669"/>
    <property type="project" value="UniProtKB-UniRule"/>
</dbReference>
<dbReference type="GO" id="GO:0004160">
    <property type="term" value="F:dihydroxy-acid dehydratase activity"/>
    <property type="evidence" value="ECO:0007669"/>
    <property type="project" value="UniProtKB-UniRule"/>
</dbReference>
<dbReference type="GO" id="GO:0000287">
    <property type="term" value="F:magnesium ion binding"/>
    <property type="evidence" value="ECO:0007669"/>
    <property type="project" value="UniProtKB-UniRule"/>
</dbReference>
<dbReference type="GO" id="GO:0009097">
    <property type="term" value="P:isoleucine biosynthetic process"/>
    <property type="evidence" value="ECO:0007669"/>
    <property type="project" value="UniProtKB-UniRule"/>
</dbReference>
<dbReference type="GO" id="GO:0009099">
    <property type="term" value="P:L-valine biosynthetic process"/>
    <property type="evidence" value="ECO:0007669"/>
    <property type="project" value="UniProtKB-UniRule"/>
</dbReference>
<dbReference type="FunFam" id="3.50.30.80:FF:000001">
    <property type="entry name" value="Dihydroxy-acid dehydratase"/>
    <property type="match status" value="1"/>
</dbReference>
<dbReference type="Gene3D" id="3.50.30.80">
    <property type="entry name" value="IlvD/EDD C-terminal domain-like"/>
    <property type="match status" value="1"/>
</dbReference>
<dbReference type="HAMAP" id="MF_00012">
    <property type="entry name" value="IlvD"/>
    <property type="match status" value="1"/>
</dbReference>
<dbReference type="InterPro" id="IPR042096">
    <property type="entry name" value="Dihydro-acid_dehy_C"/>
</dbReference>
<dbReference type="InterPro" id="IPR004404">
    <property type="entry name" value="DihydroxyA_deHydtase"/>
</dbReference>
<dbReference type="InterPro" id="IPR020558">
    <property type="entry name" value="DiOHA_6PGluconate_deHydtase_CS"/>
</dbReference>
<dbReference type="InterPro" id="IPR056740">
    <property type="entry name" value="ILV_EDD_C"/>
</dbReference>
<dbReference type="InterPro" id="IPR000581">
    <property type="entry name" value="ILV_EDD_N"/>
</dbReference>
<dbReference type="InterPro" id="IPR037237">
    <property type="entry name" value="IlvD/EDD_N"/>
</dbReference>
<dbReference type="NCBIfam" id="TIGR00110">
    <property type="entry name" value="ilvD"/>
    <property type="match status" value="1"/>
</dbReference>
<dbReference type="NCBIfam" id="NF009103">
    <property type="entry name" value="PRK12448.1"/>
    <property type="match status" value="1"/>
</dbReference>
<dbReference type="PANTHER" id="PTHR43661">
    <property type="entry name" value="D-XYLONATE DEHYDRATASE"/>
    <property type="match status" value="1"/>
</dbReference>
<dbReference type="PANTHER" id="PTHR43661:SF3">
    <property type="entry name" value="D-XYLONATE DEHYDRATASE YAGF-RELATED"/>
    <property type="match status" value="1"/>
</dbReference>
<dbReference type="Pfam" id="PF24877">
    <property type="entry name" value="ILV_EDD_C"/>
    <property type="match status" value="1"/>
</dbReference>
<dbReference type="Pfam" id="PF00920">
    <property type="entry name" value="ILVD_EDD_N"/>
    <property type="match status" value="1"/>
</dbReference>
<dbReference type="SUPFAM" id="SSF143975">
    <property type="entry name" value="IlvD/EDD N-terminal domain-like"/>
    <property type="match status" value="1"/>
</dbReference>
<dbReference type="SUPFAM" id="SSF52016">
    <property type="entry name" value="LeuD/IlvD-like"/>
    <property type="match status" value="1"/>
</dbReference>
<dbReference type="PROSITE" id="PS00886">
    <property type="entry name" value="ILVD_EDD_1"/>
    <property type="match status" value="1"/>
</dbReference>
<dbReference type="PROSITE" id="PS00887">
    <property type="entry name" value="ILVD_EDD_2"/>
    <property type="match status" value="1"/>
</dbReference>
<reference key="1">
    <citation type="journal article" date="2008" name="Proc. Natl. Acad. Sci. U.S.A.">
        <title>The genome sequence of Bifidobacterium longum subsp. infantis reveals adaptations for milk utilization within the infant microbiome.</title>
        <authorList>
            <person name="Sela D.A."/>
            <person name="Chapman J."/>
            <person name="Adeuya A."/>
            <person name="Kim J.H."/>
            <person name="Chen F."/>
            <person name="Whitehead T.R."/>
            <person name="Lapidus A."/>
            <person name="Rokhsar D.S."/>
            <person name="Lebrilla C.B."/>
            <person name="German J.B."/>
            <person name="Price N.P."/>
            <person name="Richardson P.M."/>
            <person name="Mills D.A."/>
        </authorList>
    </citation>
    <scope>NUCLEOTIDE SEQUENCE [LARGE SCALE GENOMIC DNA]</scope>
    <source>
        <strain>ATCC 15697 / DSM 20088 / JCM 1222 / NCTC 11817 / S12</strain>
    </source>
</reference>
<reference key="2">
    <citation type="journal article" date="2011" name="Nature">
        <title>Bifidobacteria can protect from enteropathogenic infection through production of acetate.</title>
        <authorList>
            <person name="Fukuda S."/>
            <person name="Toh H."/>
            <person name="Hase K."/>
            <person name="Oshima K."/>
            <person name="Nakanishi Y."/>
            <person name="Yoshimura K."/>
            <person name="Tobe T."/>
            <person name="Clarke J.M."/>
            <person name="Topping D.L."/>
            <person name="Suzuki T."/>
            <person name="Taylor T.D."/>
            <person name="Itoh K."/>
            <person name="Kikuchi J."/>
            <person name="Morita H."/>
            <person name="Hattori M."/>
            <person name="Ohno H."/>
        </authorList>
    </citation>
    <scope>NUCLEOTIDE SEQUENCE [LARGE SCALE GENOMIC DNA]</scope>
    <source>
        <strain>ATCC 15697 / DSM 20088 / JCM 1222 / NCTC 11817 / S12</strain>
    </source>
</reference>